<name>RR18_ZYGCR</name>
<keyword id="KW-0150">Chloroplast</keyword>
<keyword id="KW-0934">Plastid</keyword>
<keyword id="KW-0687">Ribonucleoprotein</keyword>
<keyword id="KW-0689">Ribosomal protein</keyword>
<keyword id="KW-0694">RNA-binding</keyword>
<keyword id="KW-0699">rRNA-binding</keyword>
<geneLocation type="chloroplast"/>
<proteinExistence type="inferred from homology"/>
<accession>Q32RH2</accession>
<dbReference type="EMBL" id="AY958086">
    <property type="protein sequence ID" value="AAX45870.1"/>
    <property type="molecule type" value="Genomic_DNA"/>
</dbReference>
<dbReference type="RefSeq" id="YP_636554.1">
    <property type="nucleotide sequence ID" value="NC_008117.1"/>
</dbReference>
<dbReference type="SMR" id="Q32RH2"/>
<dbReference type="GeneID" id="4108190"/>
<dbReference type="GO" id="GO:0009507">
    <property type="term" value="C:chloroplast"/>
    <property type="evidence" value="ECO:0007669"/>
    <property type="project" value="UniProtKB-SubCell"/>
</dbReference>
<dbReference type="GO" id="GO:0005763">
    <property type="term" value="C:mitochondrial small ribosomal subunit"/>
    <property type="evidence" value="ECO:0007669"/>
    <property type="project" value="TreeGrafter"/>
</dbReference>
<dbReference type="GO" id="GO:0070181">
    <property type="term" value="F:small ribosomal subunit rRNA binding"/>
    <property type="evidence" value="ECO:0007669"/>
    <property type="project" value="TreeGrafter"/>
</dbReference>
<dbReference type="GO" id="GO:0003735">
    <property type="term" value="F:structural constituent of ribosome"/>
    <property type="evidence" value="ECO:0007669"/>
    <property type="project" value="InterPro"/>
</dbReference>
<dbReference type="GO" id="GO:0006412">
    <property type="term" value="P:translation"/>
    <property type="evidence" value="ECO:0007669"/>
    <property type="project" value="UniProtKB-UniRule"/>
</dbReference>
<dbReference type="Gene3D" id="4.10.640.10">
    <property type="entry name" value="Ribosomal protein S18"/>
    <property type="match status" value="1"/>
</dbReference>
<dbReference type="HAMAP" id="MF_00270">
    <property type="entry name" value="Ribosomal_bS18"/>
    <property type="match status" value="1"/>
</dbReference>
<dbReference type="InterPro" id="IPR001648">
    <property type="entry name" value="Ribosomal_bS18"/>
</dbReference>
<dbReference type="InterPro" id="IPR036870">
    <property type="entry name" value="Ribosomal_bS18_sf"/>
</dbReference>
<dbReference type="NCBIfam" id="TIGR00165">
    <property type="entry name" value="S18"/>
    <property type="match status" value="1"/>
</dbReference>
<dbReference type="PANTHER" id="PTHR13479">
    <property type="entry name" value="30S RIBOSOMAL PROTEIN S18"/>
    <property type="match status" value="1"/>
</dbReference>
<dbReference type="PANTHER" id="PTHR13479:SF40">
    <property type="entry name" value="SMALL RIBOSOMAL SUBUNIT PROTEIN BS18M"/>
    <property type="match status" value="1"/>
</dbReference>
<dbReference type="Pfam" id="PF01084">
    <property type="entry name" value="Ribosomal_S18"/>
    <property type="match status" value="1"/>
</dbReference>
<dbReference type="PRINTS" id="PR00974">
    <property type="entry name" value="RIBOSOMALS18"/>
</dbReference>
<dbReference type="SUPFAM" id="SSF46911">
    <property type="entry name" value="Ribosomal protein S18"/>
    <property type="match status" value="1"/>
</dbReference>
<evidence type="ECO:0000255" key="1">
    <source>
        <dbReference type="HAMAP-Rule" id="MF_00270"/>
    </source>
</evidence>
<evidence type="ECO:0000305" key="2"/>
<organism>
    <name type="scientific">Zygnema circumcarinatum</name>
    <name type="common">Green alga</name>
    <dbReference type="NCBI Taxonomy" id="35869"/>
    <lineage>
        <taxon>Eukaryota</taxon>
        <taxon>Viridiplantae</taxon>
        <taxon>Streptophyta</taxon>
        <taxon>Zygnematophyceae</taxon>
        <taxon>Zygnematophycidae</taxon>
        <taxon>Zygnematales</taxon>
        <taxon>Zygnemataceae</taxon>
        <taxon>Zygnema</taxon>
    </lineage>
</organism>
<feature type="chain" id="PRO_0000276894" description="Small ribosomal subunit protein bS18c">
    <location>
        <begin position="1"/>
        <end position="85"/>
    </location>
</feature>
<reference key="1">
    <citation type="journal article" date="2005" name="BMC Biol.">
        <title>The complete chloroplast DNA sequences of the charophycean green algae Staurastrum and Zygnema reveal that the chloroplast genome underwent extensive changes during the evolution of the Zygnematales.</title>
        <authorList>
            <person name="Turmel M."/>
            <person name="Otis C."/>
            <person name="Lemieux C."/>
        </authorList>
    </citation>
    <scope>NUCLEOTIDE SEQUENCE [LARGE SCALE GENOMIC DNA]</scope>
</reference>
<protein>
    <recommendedName>
        <fullName evidence="1">Small ribosomal subunit protein bS18c</fullName>
    </recommendedName>
    <alternativeName>
        <fullName evidence="2">30S ribosomal protein S18, chloroplastic</fullName>
    </alternativeName>
</protein>
<comment type="subunit">
    <text>Part of the 30S ribosomal subunit.</text>
</comment>
<comment type="subcellular location">
    <subcellularLocation>
        <location>Plastid</location>
        <location>Chloroplast</location>
    </subcellularLocation>
</comment>
<comment type="similarity">
    <text evidence="1">Belongs to the bacterial ribosomal protein bS18 family.</text>
</comment>
<sequence>MKTFINKKVSLNKRITFRRRRRKPVQPGERIDYKNLRLLCRFVSKQAKILSRRVSRLTSKQQRTVARYIKSARVLAFMPFVNNET</sequence>
<gene>
    <name evidence="1" type="primary">rps18</name>
</gene>